<comment type="function">
    <text evidence="1">Catalyzes a mechanistically unusual reaction, the ATP-dependent insertion of CO2 between the N7 and N8 nitrogen atoms of 7,8-diaminopelargonic acid (DAPA, also called 7,8-diammoniononanoate) to form a ureido ring.</text>
</comment>
<comment type="catalytic activity">
    <reaction evidence="1">
        <text>(7R,8S)-7,8-diammoniononanoate + CO2 + ATP = (4R,5S)-dethiobiotin + ADP + phosphate + 3 H(+)</text>
        <dbReference type="Rhea" id="RHEA:15805"/>
        <dbReference type="ChEBI" id="CHEBI:15378"/>
        <dbReference type="ChEBI" id="CHEBI:16526"/>
        <dbReference type="ChEBI" id="CHEBI:30616"/>
        <dbReference type="ChEBI" id="CHEBI:43474"/>
        <dbReference type="ChEBI" id="CHEBI:149469"/>
        <dbReference type="ChEBI" id="CHEBI:149473"/>
        <dbReference type="ChEBI" id="CHEBI:456216"/>
        <dbReference type="EC" id="6.3.3.3"/>
    </reaction>
</comment>
<comment type="cofactor">
    <cofactor evidence="1">
        <name>Mg(2+)</name>
        <dbReference type="ChEBI" id="CHEBI:18420"/>
    </cofactor>
</comment>
<comment type="pathway">
    <text evidence="1">Cofactor biosynthesis; biotin biosynthesis; biotin from 7,8-diaminononanoate: step 1/2.</text>
</comment>
<comment type="subunit">
    <text evidence="1">Homodimer.</text>
</comment>
<comment type="subcellular location">
    <subcellularLocation>
        <location evidence="1">Cytoplasm</location>
    </subcellularLocation>
</comment>
<comment type="similarity">
    <text evidence="1">Belongs to the dethiobiotin synthetase family.</text>
</comment>
<organism>
    <name type="scientific">Mycobacterium tuberculosis (strain ATCC 25177 / H37Ra)</name>
    <dbReference type="NCBI Taxonomy" id="419947"/>
    <lineage>
        <taxon>Bacteria</taxon>
        <taxon>Bacillati</taxon>
        <taxon>Actinomycetota</taxon>
        <taxon>Actinomycetes</taxon>
        <taxon>Mycobacteriales</taxon>
        <taxon>Mycobacteriaceae</taxon>
        <taxon>Mycobacterium</taxon>
        <taxon>Mycobacterium tuberculosis complex</taxon>
    </lineage>
</organism>
<sequence length="226" mass="22456">MTILVVTGTGTGVGKTVVCAALASAARQAGIDVAVCKPVQTGTARGDDDLAEVGRLAGVTQLAGLARYPQPMAPAAAAEHAGMALPARDQIVRLIADLDRPGRLTLVEGAGGLLVELAEPGVTLRDVAVDVAAAALVVVTADLGTLNHTKLTLEALAAQQVSCAGLVIGSWPDPPGLVAASNRSALARIAMVRAALPAGAASLDAGDFAAMSAAAFDRNWVAGLVG</sequence>
<name>BIOD_MYCTA</name>
<gene>
    <name evidence="1" type="primary">bioD</name>
    <name type="ordered locus">MRA_1582</name>
</gene>
<dbReference type="EC" id="6.3.3.3" evidence="1"/>
<dbReference type="EMBL" id="CP000611">
    <property type="protein sequence ID" value="ABQ73327.1"/>
    <property type="molecule type" value="Genomic_DNA"/>
</dbReference>
<dbReference type="RefSeq" id="WP_009935471.1">
    <property type="nucleotide sequence ID" value="NZ_CP016972.1"/>
</dbReference>
<dbReference type="SMR" id="A5U2S7"/>
<dbReference type="KEGG" id="mra:MRA_1582"/>
<dbReference type="eggNOG" id="COG0132">
    <property type="taxonomic scope" value="Bacteria"/>
</dbReference>
<dbReference type="HOGENOM" id="CLU_072551_1_0_11"/>
<dbReference type="UniPathway" id="UPA00078">
    <property type="reaction ID" value="UER00161"/>
</dbReference>
<dbReference type="Proteomes" id="UP000001988">
    <property type="component" value="Chromosome"/>
</dbReference>
<dbReference type="GO" id="GO:0005829">
    <property type="term" value="C:cytosol"/>
    <property type="evidence" value="ECO:0007669"/>
    <property type="project" value="TreeGrafter"/>
</dbReference>
<dbReference type="GO" id="GO:0005524">
    <property type="term" value="F:ATP binding"/>
    <property type="evidence" value="ECO:0007669"/>
    <property type="project" value="UniProtKB-UniRule"/>
</dbReference>
<dbReference type="GO" id="GO:0004141">
    <property type="term" value="F:dethiobiotin synthase activity"/>
    <property type="evidence" value="ECO:0007669"/>
    <property type="project" value="UniProtKB-UniRule"/>
</dbReference>
<dbReference type="GO" id="GO:0000287">
    <property type="term" value="F:magnesium ion binding"/>
    <property type="evidence" value="ECO:0007669"/>
    <property type="project" value="UniProtKB-UniRule"/>
</dbReference>
<dbReference type="GO" id="GO:0009102">
    <property type="term" value="P:biotin biosynthetic process"/>
    <property type="evidence" value="ECO:0007669"/>
    <property type="project" value="UniProtKB-UniRule"/>
</dbReference>
<dbReference type="FunFam" id="3.40.50.300:FF:002079">
    <property type="entry name" value="ATP-dependent dethiobiotin synthetase BioD"/>
    <property type="match status" value="1"/>
</dbReference>
<dbReference type="Gene3D" id="3.40.50.300">
    <property type="entry name" value="P-loop containing nucleotide triphosphate hydrolases"/>
    <property type="match status" value="1"/>
</dbReference>
<dbReference type="HAMAP" id="MF_00336">
    <property type="entry name" value="BioD"/>
    <property type="match status" value="1"/>
</dbReference>
<dbReference type="InterPro" id="IPR004472">
    <property type="entry name" value="DTB_synth_BioD"/>
</dbReference>
<dbReference type="InterPro" id="IPR027417">
    <property type="entry name" value="P-loop_NTPase"/>
</dbReference>
<dbReference type="NCBIfam" id="TIGR00347">
    <property type="entry name" value="bioD"/>
    <property type="match status" value="1"/>
</dbReference>
<dbReference type="PANTHER" id="PTHR43210">
    <property type="entry name" value="DETHIOBIOTIN SYNTHETASE"/>
    <property type="match status" value="1"/>
</dbReference>
<dbReference type="PANTHER" id="PTHR43210:SF5">
    <property type="entry name" value="DETHIOBIOTIN SYNTHETASE"/>
    <property type="match status" value="1"/>
</dbReference>
<dbReference type="Pfam" id="PF13500">
    <property type="entry name" value="AAA_26"/>
    <property type="match status" value="1"/>
</dbReference>
<dbReference type="SUPFAM" id="SSF52540">
    <property type="entry name" value="P-loop containing nucleoside triphosphate hydrolases"/>
    <property type="match status" value="1"/>
</dbReference>
<reference key="1">
    <citation type="journal article" date="2008" name="PLoS ONE">
        <title>Genetic basis of virulence attenuation revealed by comparative genomic analysis of Mycobacterium tuberculosis strain H37Ra versus H37Rv.</title>
        <authorList>
            <person name="Zheng H."/>
            <person name="Lu L."/>
            <person name="Wang B."/>
            <person name="Pu S."/>
            <person name="Zhang X."/>
            <person name="Zhu G."/>
            <person name="Shi W."/>
            <person name="Zhang L."/>
            <person name="Wang H."/>
            <person name="Wang S."/>
            <person name="Zhao G."/>
            <person name="Zhang Y."/>
        </authorList>
    </citation>
    <scope>NUCLEOTIDE SEQUENCE [LARGE SCALE GENOMIC DNA]</scope>
    <source>
        <strain>ATCC 25177 / H37Ra</strain>
    </source>
</reference>
<protein>
    <recommendedName>
        <fullName evidence="1">ATP-dependent dethiobiotin synthetase BioD</fullName>
        <ecNumber evidence="1">6.3.3.3</ecNumber>
    </recommendedName>
    <alternativeName>
        <fullName evidence="1">DTB synthetase</fullName>
        <shortName evidence="1">DTBS</shortName>
    </alternativeName>
    <alternativeName>
        <fullName evidence="1">Dethiobiotin synthase</fullName>
    </alternativeName>
</protein>
<keyword id="KW-0067">ATP-binding</keyword>
<keyword id="KW-0093">Biotin biosynthesis</keyword>
<keyword id="KW-0963">Cytoplasm</keyword>
<keyword id="KW-0436">Ligase</keyword>
<keyword id="KW-0460">Magnesium</keyword>
<keyword id="KW-0479">Metal-binding</keyword>
<keyword id="KW-0547">Nucleotide-binding</keyword>
<keyword id="KW-1185">Reference proteome</keyword>
<feature type="chain" id="PRO_0000302529" description="ATP-dependent dethiobiotin synthetase BioD">
    <location>
        <begin position="1"/>
        <end position="226"/>
    </location>
</feature>
<feature type="active site" evidence="1">
    <location>
        <position position="37"/>
    </location>
</feature>
<feature type="binding site" evidence="1">
    <location>
        <begin position="12"/>
        <end position="17"/>
    </location>
    <ligand>
        <name>ATP</name>
        <dbReference type="ChEBI" id="CHEBI:30616"/>
    </ligand>
</feature>
<feature type="binding site" evidence="1">
    <location>
        <position position="16"/>
    </location>
    <ligand>
        <name>Mg(2+)</name>
        <dbReference type="ChEBI" id="CHEBI:18420"/>
    </ligand>
</feature>
<feature type="binding site" evidence="1">
    <location>
        <position position="41"/>
    </location>
    <ligand>
        <name>substrate</name>
    </ligand>
</feature>
<feature type="binding site" evidence="1">
    <location>
        <position position="49"/>
    </location>
    <ligand>
        <name>ATP</name>
        <dbReference type="ChEBI" id="CHEBI:30616"/>
    </ligand>
</feature>
<feature type="binding site" evidence="1">
    <location>
        <position position="49"/>
    </location>
    <ligand>
        <name>Mg(2+)</name>
        <dbReference type="ChEBI" id="CHEBI:18420"/>
    </ligand>
</feature>
<feature type="binding site" evidence="1">
    <location>
        <begin position="108"/>
        <end position="111"/>
    </location>
    <ligand>
        <name>ATP</name>
        <dbReference type="ChEBI" id="CHEBI:30616"/>
    </ligand>
</feature>
<feature type="binding site" evidence="1">
    <location>
        <position position="108"/>
    </location>
    <ligand>
        <name>Mg(2+)</name>
        <dbReference type="ChEBI" id="CHEBI:18420"/>
    </ligand>
</feature>
<feature type="binding site" evidence="1">
    <location>
        <begin position="169"/>
        <end position="170"/>
    </location>
    <ligand>
        <name>ATP</name>
        <dbReference type="ChEBI" id="CHEBI:30616"/>
    </ligand>
</feature>
<feature type="binding site" evidence="1">
    <location>
        <begin position="197"/>
        <end position="199"/>
    </location>
    <ligand>
        <name>ATP</name>
        <dbReference type="ChEBI" id="CHEBI:30616"/>
    </ligand>
</feature>
<accession>A5U2S7</accession>
<evidence type="ECO:0000255" key="1">
    <source>
        <dbReference type="HAMAP-Rule" id="MF_00336"/>
    </source>
</evidence>
<proteinExistence type="inferred from homology"/>